<sequence length="315" mass="36445">MATTKLGNTKSASRAINYAEKRAEEKSGLNCDVDYAKSAFKQTRALYGKEDGIQAHTVIQSFKPGEVTPEQCNQLGLELAEKIAPNHQVAVYTHTDKDHYHNHIVINSVDLETGKKYQSNKKQRDLVKKENDNICREHGLSVTERGIAKMRYTQAEKGIVFDRDEYSWKDELRDLIENAKTHTSNLETFSEHLEEKGVGVKLRGETISYKPENENKWVRGRTLGSEYEKGAIDHEHERHQKQQREPEYADEFKINWDAVEQHTEQLKQRRVERAQETKQAHSKISSRDTRESENQRERAKGNNIRIERGDEGLSR</sequence>
<keyword id="KW-0614">Plasmid</keyword>
<accession>P03865</accession>
<proteinExistence type="predicted"/>
<dbReference type="EMBL" id="X02166">
    <property type="protein sequence ID" value="CAA26106.1"/>
    <property type="molecule type" value="Genomic_DNA"/>
</dbReference>
<dbReference type="EMBL" id="X02529">
    <property type="protein sequence ID" value="CAA26368.1"/>
    <property type="molecule type" value="Genomic_DNA"/>
</dbReference>
<dbReference type="PIR" id="A04494">
    <property type="entry name" value="QQSAA2"/>
</dbReference>
<dbReference type="RefSeq" id="NP_052695.2">
    <property type="nucleotide sequence ID" value="NC_002129.1"/>
</dbReference>
<dbReference type="RefSeq" id="WP_002493199.1">
    <property type="nucleotide sequence ID" value="NZ_JAAFMS010000135.1"/>
</dbReference>
<dbReference type="RefSeq" id="YP_001595587.1">
    <property type="nucleotide sequence ID" value="NC_010111.1"/>
</dbReference>
<dbReference type="RefSeq" id="YP_232728.1">
    <property type="nucleotide sequence ID" value="NC_006977.1"/>
</dbReference>
<dbReference type="InterPro" id="IPR005094">
    <property type="entry name" value="Endonuclease_MobA/VirD2"/>
</dbReference>
<dbReference type="Pfam" id="PF03432">
    <property type="entry name" value="Relaxase"/>
    <property type="match status" value="1"/>
</dbReference>
<gene>
    <name type="primary">rlx</name>
</gene>
<geneLocation type="plasmid">
    <name>pC221</name>
</geneLocation>
<comment type="function">
    <text>This protein is probably required for relaxation complex formation and plasmid mobilization by conjugative plasmids.</text>
</comment>
<organism>
    <name type="scientific">Staphylococcus aureus</name>
    <dbReference type="NCBI Taxonomy" id="1280"/>
    <lineage>
        <taxon>Bacteria</taxon>
        <taxon>Bacillati</taxon>
        <taxon>Bacillota</taxon>
        <taxon>Bacilli</taxon>
        <taxon>Bacillales</taxon>
        <taxon>Staphylococcaceae</taxon>
        <taxon>Staphylococcus</taxon>
    </lineage>
</organism>
<protein>
    <recommendedName>
        <fullName>Protein rlx</fullName>
    </recommendedName>
</protein>
<feature type="chain" id="PRO_0000068436" description="Protein rlx">
    <location>
        <begin position="1"/>
        <end position="315"/>
    </location>
</feature>
<feature type="region of interest" description="Disordered" evidence="1">
    <location>
        <begin position="263"/>
        <end position="315"/>
    </location>
</feature>
<feature type="sequence conflict" description="In Ref. 2; CAA26368." evidence="2" ref="2">
    <original>V</original>
    <variation>VPWTNTRLRI</variation>
    <location>
        <position position="218"/>
    </location>
</feature>
<name>RLX2_STAAU</name>
<reference key="1">
    <citation type="journal article" date="1985" name="EMBO J.">
        <title>The use of synthetic oligonucleotides with universal templates for rapid DNA sequencing: results with staphylococcal replicon pC221.</title>
        <authorList>
            <person name="Brenner D.G."/>
            <person name="Shaw W.V."/>
        </authorList>
    </citation>
    <scope>NUCLEOTIDE SEQUENCE [GENOMIC DNA]</scope>
</reference>
<reference key="2">
    <citation type="journal article" date="1985" name="Mol. Gen. Genet.">
        <title>Comparative sequence and functional analysis of pT181 and pC221, cognate plasmid replicons from Staphylococcus aureus.</title>
        <authorList>
            <person name="Projan S.J."/>
            <person name="Kornblum J."/>
            <person name="Moghazeh S.L."/>
            <person name="Edelman I."/>
            <person name="Gennaro M.L."/>
            <person name="Novick R.P."/>
        </authorList>
    </citation>
    <scope>NUCLEOTIDE SEQUENCE [GENOMIC DNA]</scope>
</reference>
<evidence type="ECO:0000256" key="1">
    <source>
        <dbReference type="SAM" id="MobiDB-lite"/>
    </source>
</evidence>
<evidence type="ECO:0000305" key="2"/>